<feature type="chain" id="PRO_0000130482" description="Large ribosomal subunit protein uL29">
    <location>
        <begin position="1"/>
        <end position="72"/>
    </location>
</feature>
<feature type="helix" evidence="4">
    <location>
        <begin position="2"/>
        <end position="11"/>
    </location>
</feature>
<feature type="turn" evidence="3">
    <location>
        <begin position="12"/>
        <end position="15"/>
    </location>
</feature>
<feature type="helix" evidence="4">
    <location>
        <begin position="17"/>
        <end position="40"/>
    </location>
</feature>
<feature type="strand" evidence="5">
    <location>
        <begin position="42"/>
        <end position="44"/>
    </location>
</feature>
<feature type="helix" evidence="4">
    <location>
        <begin position="49"/>
        <end position="61"/>
    </location>
</feature>
<keyword id="KW-0002">3D-structure</keyword>
<keyword id="KW-0687">Ribonucleoprotein</keyword>
<keyword id="KW-0689">Ribosomal protein</keyword>
<gene>
    <name evidence="1" type="primary">rpmC</name>
    <name type="ordered locus">TT_C1320</name>
</gene>
<name>RL29_THET2</name>
<comment type="similarity">
    <text evidence="1">Belongs to the universal ribosomal protein uL29 family.</text>
</comment>
<sequence>MKLSEVRKQLEEARKLSPVELEKLVREKKRELMELRFQASIGQLSQNHKIRDLKRQIARLLTVLNEKRRQNA</sequence>
<accession>Q72I12</accession>
<organism>
    <name type="scientific">Thermus thermophilus (strain ATCC BAA-163 / DSM 7039 / HB27)</name>
    <dbReference type="NCBI Taxonomy" id="262724"/>
    <lineage>
        <taxon>Bacteria</taxon>
        <taxon>Thermotogati</taxon>
        <taxon>Deinococcota</taxon>
        <taxon>Deinococci</taxon>
        <taxon>Thermales</taxon>
        <taxon>Thermaceae</taxon>
        <taxon>Thermus</taxon>
    </lineage>
</organism>
<proteinExistence type="evidence at protein level"/>
<dbReference type="EMBL" id="AE017221">
    <property type="protein sequence ID" value="AAS81662.1"/>
    <property type="molecule type" value="Genomic_DNA"/>
</dbReference>
<dbReference type="RefSeq" id="WP_008633416.1">
    <property type="nucleotide sequence ID" value="NC_005835.1"/>
</dbReference>
<dbReference type="PDB" id="4V4I">
    <property type="method" value="X-ray"/>
    <property type="resolution" value="3.71 A"/>
    <property type="chains" value="W=1-72"/>
</dbReference>
<dbReference type="PDB" id="4V4J">
    <property type="method" value="X-ray"/>
    <property type="resolution" value="3.83 A"/>
    <property type="chains" value="W=1-72"/>
</dbReference>
<dbReference type="PDB" id="4V63">
    <property type="method" value="X-ray"/>
    <property type="resolution" value="3.21 A"/>
    <property type="chains" value="B2/D2=1-72"/>
</dbReference>
<dbReference type="PDB" id="4V67">
    <property type="method" value="X-ray"/>
    <property type="resolution" value="3.00 A"/>
    <property type="chains" value="B2/D2=1-72"/>
</dbReference>
<dbReference type="PDB" id="4V7P">
    <property type="method" value="X-ray"/>
    <property type="resolution" value="3.62 A"/>
    <property type="chains" value="BY/CY=1-72"/>
</dbReference>
<dbReference type="PDB" id="4V83">
    <property type="method" value="X-ray"/>
    <property type="resolution" value="3.50 A"/>
    <property type="chains" value="BY/DY=1-62"/>
</dbReference>
<dbReference type="PDB" id="4V84">
    <property type="method" value="X-ray"/>
    <property type="resolution" value="3.40 A"/>
    <property type="chains" value="BY/DY=1-62"/>
</dbReference>
<dbReference type="PDB" id="4V9J">
    <property type="method" value="X-ray"/>
    <property type="resolution" value="3.86 A"/>
    <property type="chains" value="B2/D2=2-72"/>
</dbReference>
<dbReference type="PDB" id="4V9K">
    <property type="method" value="X-ray"/>
    <property type="resolution" value="3.50 A"/>
    <property type="chains" value="B2/D2=2-72"/>
</dbReference>
<dbReference type="PDB" id="4V9L">
    <property type="method" value="X-ray"/>
    <property type="resolution" value="3.50 A"/>
    <property type="chains" value="B2/D2=2-72"/>
</dbReference>
<dbReference type="PDB" id="4V9M">
    <property type="method" value="X-ray"/>
    <property type="resolution" value="4.00 A"/>
    <property type="chains" value="B2/D2=2-72"/>
</dbReference>
<dbReference type="PDB" id="4V9N">
    <property type="method" value="X-ray"/>
    <property type="resolution" value="3.40 A"/>
    <property type="chains" value="B2/D2=1-62"/>
</dbReference>
<dbReference type="PDB" id="4V9Q">
    <property type="method" value="X-ray"/>
    <property type="resolution" value="3.40 A"/>
    <property type="chains" value="AY/CY=1-62"/>
</dbReference>
<dbReference type="PDB" id="4W29">
    <property type="method" value="X-ray"/>
    <property type="resolution" value="3.80 A"/>
    <property type="chains" value="B2/D2=2-72"/>
</dbReference>
<dbReference type="PDB" id="4XEJ">
    <property type="method" value="X-ray"/>
    <property type="resolution" value="3.80 A"/>
    <property type="chains" value="AL29/BL29=1-62"/>
</dbReference>
<dbReference type="PDB" id="5J4D">
    <property type="method" value="X-ray"/>
    <property type="resolution" value="3.10 A"/>
    <property type="chains" value="EC/Z=1-72"/>
</dbReference>
<dbReference type="PDB" id="5V8I">
    <property type="method" value="X-ray"/>
    <property type="resolution" value="3.25 A"/>
    <property type="chains" value="12/22=1-72"/>
</dbReference>
<dbReference type="PDB" id="6B4V">
    <property type="method" value="X-ray"/>
    <property type="resolution" value="3.40 A"/>
    <property type="chains" value="DC/Z=1-72"/>
</dbReference>
<dbReference type="PDB" id="6BOH">
    <property type="method" value="X-ray"/>
    <property type="resolution" value="3.40 A"/>
    <property type="chains" value="EC/Z=1-72"/>
</dbReference>
<dbReference type="PDB" id="6BOK">
    <property type="method" value="X-ray"/>
    <property type="resolution" value="3.55 A"/>
    <property type="chains" value="CC/Z=1-72"/>
</dbReference>
<dbReference type="PDB" id="6N1D">
    <property type="method" value="X-ray"/>
    <property type="resolution" value="3.20 A"/>
    <property type="chains" value="AL29/BL29=1-72"/>
</dbReference>
<dbReference type="PDBsum" id="4V4I"/>
<dbReference type="PDBsum" id="4V4J"/>
<dbReference type="PDBsum" id="4V63"/>
<dbReference type="PDBsum" id="4V67"/>
<dbReference type="PDBsum" id="4V7P"/>
<dbReference type="PDBsum" id="4V83"/>
<dbReference type="PDBsum" id="4V84"/>
<dbReference type="PDBsum" id="4V9J"/>
<dbReference type="PDBsum" id="4V9K"/>
<dbReference type="PDBsum" id="4V9L"/>
<dbReference type="PDBsum" id="4V9M"/>
<dbReference type="PDBsum" id="4V9N"/>
<dbReference type="PDBsum" id="4V9Q"/>
<dbReference type="PDBsum" id="4W29"/>
<dbReference type="PDBsum" id="4XEJ"/>
<dbReference type="PDBsum" id="5J4D"/>
<dbReference type="PDBsum" id="5V8I"/>
<dbReference type="PDBsum" id="6B4V"/>
<dbReference type="PDBsum" id="6BOH"/>
<dbReference type="PDBsum" id="6BOK"/>
<dbReference type="PDBsum" id="6N1D"/>
<dbReference type="SMR" id="Q72I12"/>
<dbReference type="IntAct" id="Q72I12">
    <property type="interactions" value="4"/>
</dbReference>
<dbReference type="GeneID" id="3169832"/>
<dbReference type="KEGG" id="tth:TT_C1320"/>
<dbReference type="eggNOG" id="COG0255">
    <property type="taxonomic scope" value="Bacteria"/>
</dbReference>
<dbReference type="HOGENOM" id="CLU_158491_0_2_0"/>
<dbReference type="OrthoDB" id="9815192at2"/>
<dbReference type="Proteomes" id="UP000000592">
    <property type="component" value="Chromosome"/>
</dbReference>
<dbReference type="GO" id="GO:0022625">
    <property type="term" value="C:cytosolic large ribosomal subunit"/>
    <property type="evidence" value="ECO:0007669"/>
    <property type="project" value="TreeGrafter"/>
</dbReference>
<dbReference type="GO" id="GO:0003735">
    <property type="term" value="F:structural constituent of ribosome"/>
    <property type="evidence" value="ECO:0007669"/>
    <property type="project" value="InterPro"/>
</dbReference>
<dbReference type="GO" id="GO:0006412">
    <property type="term" value="P:translation"/>
    <property type="evidence" value="ECO:0007669"/>
    <property type="project" value="UniProtKB-UniRule"/>
</dbReference>
<dbReference type="CDD" id="cd00427">
    <property type="entry name" value="Ribosomal_L29_HIP"/>
    <property type="match status" value="1"/>
</dbReference>
<dbReference type="FunFam" id="1.10.287.310:FF:000001">
    <property type="entry name" value="50S ribosomal protein L29"/>
    <property type="match status" value="1"/>
</dbReference>
<dbReference type="Gene3D" id="1.10.287.310">
    <property type="match status" value="1"/>
</dbReference>
<dbReference type="HAMAP" id="MF_00374">
    <property type="entry name" value="Ribosomal_uL29"/>
    <property type="match status" value="1"/>
</dbReference>
<dbReference type="InterPro" id="IPR050063">
    <property type="entry name" value="Ribosomal_protein_uL29"/>
</dbReference>
<dbReference type="InterPro" id="IPR001854">
    <property type="entry name" value="Ribosomal_uL29"/>
</dbReference>
<dbReference type="InterPro" id="IPR018254">
    <property type="entry name" value="Ribosomal_uL29_CS"/>
</dbReference>
<dbReference type="InterPro" id="IPR036049">
    <property type="entry name" value="Ribosomal_uL29_sf"/>
</dbReference>
<dbReference type="NCBIfam" id="TIGR00012">
    <property type="entry name" value="L29"/>
    <property type="match status" value="1"/>
</dbReference>
<dbReference type="PANTHER" id="PTHR10916">
    <property type="entry name" value="60S RIBOSOMAL PROTEIN L35/50S RIBOSOMAL PROTEIN L29"/>
    <property type="match status" value="1"/>
</dbReference>
<dbReference type="PANTHER" id="PTHR10916:SF0">
    <property type="entry name" value="LARGE RIBOSOMAL SUBUNIT PROTEIN UL29C"/>
    <property type="match status" value="1"/>
</dbReference>
<dbReference type="Pfam" id="PF00831">
    <property type="entry name" value="Ribosomal_L29"/>
    <property type="match status" value="1"/>
</dbReference>
<dbReference type="SUPFAM" id="SSF46561">
    <property type="entry name" value="Ribosomal protein L29 (L29p)"/>
    <property type="match status" value="1"/>
</dbReference>
<dbReference type="PROSITE" id="PS00579">
    <property type="entry name" value="RIBOSOMAL_L29"/>
    <property type="match status" value="1"/>
</dbReference>
<protein>
    <recommendedName>
        <fullName evidence="1">Large ribosomal subunit protein uL29</fullName>
    </recommendedName>
    <alternativeName>
        <fullName evidence="2">50S ribosomal protein L29</fullName>
    </alternativeName>
</protein>
<reference key="1">
    <citation type="journal article" date="2004" name="Nat. Biotechnol.">
        <title>The genome sequence of the extreme thermophile Thermus thermophilus.</title>
        <authorList>
            <person name="Henne A."/>
            <person name="Brueggemann H."/>
            <person name="Raasch C."/>
            <person name="Wiezer A."/>
            <person name="Hartsch T."/>
            <person name="Liesegang H."/>
            <person name="Johann A."/>
            <person name="Lienard T."/>
            <person name="Gohl O."/>
            <person name="Martinez-Arias R."/>
            <person name="Jacobi C."/>
            <person name="Starkuviene V."/>
            <person name="Schlenczeck S."/>
            <person name="Dencker S."/>
            <person name="Huber R."/>
            <person name="Klenk H.-P."/>
            <person name="Kramer W."/>
            <person name="Merkl R."/>
            <person name="Gottschalk G."/>
            <person name="Fritz H.-J."/>
        </authorList>
    </citation>
    <scope>NUCLEOTIDE SEQUENCE [LARGE SCALE GENOMIC DNA]</scope>
    <source>
        <strain>ATCC BAA-163 / DSM 7039 / HB27</strain>
    </source>
</reference>
<evidence type="ECO:0000255" key="1">
    <source>
        <dbReference type="HAMAP-Rule" id="MF_00374"/>
    </source>
</evidence>
<evidence type="ECO:0000305" key="2"/>
<evidence type="ECO:0007829" key="3">
    <source>
        <dbReference type="PDB" id="4V63"/>
    </source>
</evidence>
<evidence type="ECO:0007829" key="4">
    <source>
        <dbReference type="PDB" id="4V67"/>
    </source>
</evidence>
<evidence type="ECO:0007829" key="5">
    <source>
        <dbReference type="PDB" id="4V9N"/>
    </source>
</evidence>